<evidence type="ECO:0000250" key="1"/>
<evidence type="ECO:0000250" key="2">
    <source>
        <dbReference type="UniProtKB" id="P59622"/>
    </source>
</evidence>
<evidence type="ECO:0000255" key="3">
    <source>
        <dbReference type="PROSITE-ProRule" id="PRU00191"/>
    </source>
</evidence>
<evidence type="ECO:0000255" key="4">
    <source>
        <dbReference type="PROSITE-ProRule" id="PRU00192"/>
    </source>
</evidence>
<evidence type="ECO:0000256" key="5">
    <source>
        <dbReference type="SAM" id="MobiDB-lite"/>
    </source>
</evidence>
<evidence type="ECO:0000269" key="6">
    <source>
    </source>
</evidence>
<evidence type="ECO:0000269" key="7">
    <source>
    </source>
</evidence>
<evidence type="ECO:0000269" key="8">
    <source>
    </source>
</evidence>
<evidence type="ECO:0000269" key="9">
    <source>
    </source>
</evidence>
<evidence type="ECO:0000269" key="10">
    <source>
    </source>
</evidence>
<evidence type="ECO:0000303" key="11">
    <source>
    </source>
</evidence>
<evidence type="ECO:0000305" key="12"/>
<evidence type="ECO:0007744" key="13">
    <source>
    </source>
</evidence>
<gene>
    <name type="primary">Sla</name>
    <name type="synonym">Slap</name>
    <name type="synonym">Slap1</name>
</gene>
<comment type="function">
    <text evidence="6 7 8">Adapter protein, which negatively regulates T-cell receptor (TCR) signaling. Inhibits T-cell antigen-receptor induced activation of nuclear factor of activated T-cells. Involved in the negative regulation of positive selection and mitosis of T-cells. May act by linking signaling proteins such as ZAP70 with CBL, leading to a CBL dependent degradation of signaling proteins.</text>
</comment>
<comment type="subunit">
    <text evidence="1 6 9 10">Homodimer. Interacts with phosphorylated CBL, SYK and LAT. Homodimerization and interaction with phosphorylated CBL occurs via its C-terminal domain (By similarity). Interacts with PDGFRB and EPHA2. Interacts with phosphorylated proteins ZAP70; CD3Z; VAV1 and LCP2 via its SH2 domain.</text>
</comment>
<comment type="subcellular location">
    <subcellularLocation>
        <location evidence="7">Cytoplasm</location>
    </subcellularLocation>
    <subcellularLocation>
        <location evidence="7">Endosome</location>
    </subcellularLocation>
    <text>Colocalizes with endosomes.</text>
</comment>
<comment type="alternative products">
    <event type="alternative splicing"/>
    <isoform>
        <id>Q60898-1</id>
        <name>1</name>
        <sequence type="displayed"/>
    </isoform>
    <isoform>
        <id>Q60898-2</id>
        <name>2</name>
        <sequence type="described" ref="VSP_007239"/>
    </isoform>
</comment>
<comment type="tissue specificity">
    <text evidence="9">Predominantly expressed in lymphoid tissues. Highly expressed in spleen, thymus and lymph nodes. Weakly expressed in lung and brain. Expressed in T-cells and at low level in B-cells.</text>
</comment>
<comment type="developmental stage">
    <text evidence="8">Expressed during thymocyte maturation. Weakly expressed in CD4(-) CD8(-) thymocytes, strongly expressed in CD4(+) CD8(+) thymocytes, while expression decreases in more mature cells.</text>
</comment>
<comment type="domain">
    <text evidence="1">The C-terminal domain is essential for the homodimerization and the interaction with CBL. While the interaction with CBL is apparently mediated via the hydrophobic region of this domain, the highly charged region is apparently required for the homodimerization (By similarity).</text>
</comment>
<comment type="miscellaneous">
    <text>SLA deficient mice show a strong up-regulation of TCR and CD5 at the CD4(+) CD8(+) stage, and an enhanced positive selection in T-cells.</text>
</comment>
<sequence>MGNSMKSTSPPSERPLSSSEGLESDFLAVLTDYPSPDISPPIFRRGEKLRVISDEGGWWKAISLSTGRESYIPGICVARVYHGWLFEGLGRDKAEELLQLPDTKIGSFMIRESETKKGFYSLSVRHRQVKHYRIFRLPNNWYYISPRLTFQCLEDLVTHYSEVADGLCCVLTTPCLAQNIPAPTSHPSPCTSPGSPVTLRQKTFDWKRVSRLQEGSEGAENPLRVDESLFSYGLRESIASYLSLTGDDSSSFDRKKKSLSLMYTGSKRKSSFFSAPQYFED</sequence>
<reference key="1">
    <citation type="journal article" date="1995" name="J. Biol. Chem.">
        <title>Characterization of a novel Src-like adapter protein that associates with the Eck receptor tyrosine kinase.</title>
        <authorList>
            <person name="Pandey A."/>
            <person name="Duan H."/>
            <person name="Dixit V.M."/>
        </authorList>
    </citation>
    <scope>NUCLEOTIDE SEQUENCE [MRNA] (ISOFORM 1)</scope>
    <scope>TISSUE SPECIFICITY</scope>
    <scope>INTERACTION WITH EPHA2</scope>
    <source>
        <tissue>Embryonic brain</tissue>
    </source>
</reference>
<reference key="2">
    <citation type="journal article" date="1999" name="Immunogenetics">
        <title>Differential gene expression in CD3epsilon- and RAG1-deficient thymuses: definition of a set of genes potentially involved in thymocyte maturation.</title>
        <authorList>
            <person name="Carrier A."/>
            <person name="Nguyen C."/>
            <person name="Victorero G."/>
            <person name="Granjeaud S."/>
            <person name="Rocha D."/>
            <person name="Bernard K."/>
            <person name="Miazek A."/>
            <person name="Ferrier P."/>
            <person name="Malissen M."/>
            <person name="Naquet P."/>
            <person name="Malissen B."/>
            <person name="Jordan B.R."/>
        </authorList>
    </citation>
    <scope>NUCLEOTIDE SEQUENCE [MRNA] (ISOFORM 1)</scope>
</reference>
<reference key="3">
    <citation type="journal article" date="2001" name="Mamm. Genome">
        <title>High-throughput sequence identification of gene coding variants within alcohol-related QTLs.</title>
        <authorList>
            <person name="Ehringer M.A."/>
            <person name="Thompson J."/>
            <person name="Conroy O."/>
            <person name="Xu Y."/>
            <person name="Yang F."/>
            <person name="Canniff J."/>
            <person name="Beeson M."/>
            <person name="Gordon L."/>
            <person name="Bennett B."/>
            <person name="Johnson T.E."/>
            <person name="Sikela J.M."/>
        </authorList>
    </citation>
    <scope>NUCLEOTIDE SEQUENCE [GENOMIC DNA] (ISOFORM 1)</scope>
    <source>
        <strain>ILS</strain>
        <strain>ISS</strain>
    </source>
</reference>
<reference key="4">
    <citation type="journal article" date="2005" name="Science">
        <title>The transcriptional landscape of the mammalian genome.</title>
        <authorList>
            <person name="Carninci P."/>
            <person name="Kasukawa T."/>
            <person name="Katayama S."/>
            <person name="Gough J."/>
            <person name="Frith M.C."/>
            <person name="Maeda N."/>
            <person name="Oyama R."/>
            <person name="Ravasi T."/>
            <person name="Lenhard B."/>
            <person name="Wells C."/>
            <person name="Kodzius R."/>
            <person name="Shimokawa K."/>
            <person name="Bajic V.B."/>
            <person name="Brenner S.E."/>
            <person name="Batalov S."/>
            <person name="Forrest A.R."/>
            <person name="Zavolan M."/>
            <person name="Davis M.J."/>
            <person name="Wilming L.G."/>
            <person name="Aidinis V."/>
            <person name="Allen J.E."/>
            <person name="Ambesi-Impiombato A."/>
            <person name="Apweiler R."/>
            <person name="Aturaliya R.N."/>
            <person name="Bailey T.L."/>
            <person name="Bansal M."/>
            <person name="Baxter L."/>
            <person name="Beisel K.W."/>
            <person name="Bersano T."/>
            <person name="Bono H."/>
            <person name="Chalk A.M."/>
            <person name="Chiu K.P."/>
            <person name="Choudhary V."/>
            <person name="Christoffels A."/>
            <person name="Clutterbuck D.R."/>
            <person name="Crowe M.L."/>
            <person name="Dalla E."/>
            <person name="Dalrymple B.P."/>
            <person name="de Bono B."/>
            <person name="Della Gatta G."/>
            <person name="di Bernardo D."/>
            <person name="Down T."/>
            <person name="Engstrom P."/>
            <person name="Fagiolini M."/>
            <person name="Faulkner G."/>
            <person name="Fletcher C.F."/>
            <person name="Fukushima T."/>
            <person name="Furuno M."/>
            <person name="Futaki S."/>
            <person name="Gariboldi M."/>
            <person name="Georgii-Hemming P."/>
            <person name="Gingeras T.R."/>
            <person name="Gojobori T."/>
            <person name="Green R.E."/>
            <person name="Gustincich S."/>
            <person name="Harbers M."/>
            <person name="Hayashi Y."/>
            <person name="Hensch T.K."/>
            <person name="Hirokawa N."/>
            <person name="Hill D."/>
            <person name="Huminiecki L."/>
            <person name="Iacono M."/>
            <person name="Ikeo K."/>
            <person name="Iwama A."/>
            <person name="Ishikawa T."/>
            <person name="Jakt M."/>
            <person name="Kanapin A."/>
            <person name="Katoh M."/>
            <person name="Kawasawa Y."/>
            <person name="Kelso J."/>
            <person name="Kitamura H."/>
            <person name="Kitano H."/>
            <person name="Kollias G."/>
            <person name="Krishnan S.P."/>
            <person name="Kruger A."/>
            <person name="Kummerfeld S.K."/>
            <person name="Kurochkin I.V."/>
            <person name="Lareau L.F."/>
            <person name="Lazarevic D."/>
            <person name="Lipovich L."/>
            <person name="Liu J."/>
            <person name="Liuni S."/>
            <person name="McWilliam S."/>
            <person name="Madan Babu M."/>
            <person name="Madera M."/>
            <person name="Marchionni L."/>
            <person name="Matsuda H."/>
            <person name="Matsuzawa S."/>
            <person name="Miki H."/>
            <person name="Mignone F."/>
            <person name="Miyake S."/>
            <person name="Morris K."/>
            <person name="Mottagui-Tabar S."/>
            <person name="Mulder N."/>
            <person name="Nakano N."/>
            <person name="Nakauchi H."/>
            <person name="Ng P."/>
            <person name="Nilsson R."/>
            <person name="Nishiguchi S."/>
            <person name="Nishikawa S."/>
            <person name="Nori F."/>
            <person name="Ohara O."/>
            <person name="Okazaki Y."/>
            <person name="Orlando V."/>
            <person name="Pang K.C."/>
            <person name="Pavan W.J."/>
            <person name="Pavesi G."/>
            <person name="Pesole G."/>
            <person name="Petrovsky N."/>
            <person name="Piazza S."/>
            <person name="Reed J."/>
            <person name="Reid J.F."/>
            <person name="Ring B.Z."/>
            <person name="Ringwald M."/>
            <person name="Rost B."/>
            <person name="Ruan Y."/>
            <person name="Salzberg S.L."/>
            <person name="Sandelin A."/>
            <person name="Schneider C."/>
            <person name="Schoenbach C."/>
            <person name="Sekiguchi K."/>
            <person name="Semple C.A."/>
            <person name="Seno S."/>
            <person name="Sessa L."/>
            <person name="Sheng Y."/>
            <person name="Shibata Y."/>
            <person name="Shimada H."/>
            <person name="Shimada K."/>
            <person name="Silva D."/>
            <person name="Sinclair B."/>
            <person name="Sperling S."/>
            <person name="Stupka E."/>
            <person name="Sugiura K."/>
            <person name="Sultana R."/>
            <person name="Takenaka Y."/>
            <person name="Taki K."/>
            <person name="Tammoja K."/>
            <person name="Tan S.L."/>
            <person name="Tang S."/>
            <person name="Taylor M.S."/>
            <person name="Tegner J."/>
            <person name="Teichmann S.A."/>
            <person name="Ueda H.R."/>
            <person name="van Nimwegen E."/>
            <person name="Verardo R."/>
            <person name="Wei C.L."/>
            <person name="Yagi K."/>
            <person name="Yamanishi H."/>
            <person name="Zabarovsky E."/>
            <person name="Zhu S."/>
            <person name="Zimmer A."/>
            <person name="Hide W."/>
            <person name="Bult C."/>
            <person name="Grimmond S.M."/>
            <person name="Teasdale R.D."/>
            <person name="Liu E.T."/>
            <person name="Brusic V."/>
            <person name="Quackenbush J."/>
            <person name="Wahlestedt C."/>
            <person name="Mattick J.S."/>
            <person name="Hume D.A."/>
            <person name="Kai C."/>
            <person name="Sasaki D."/>
            <person name="Tomaru Y."/>
            <person name="Fukuda S."/>
            <person name="Kanamori-Katayama M."/>
            <person name="Suzuki M."/>
            <person name="Aoki J."/>
            <person name="Arakawa T."/>
            <person name="Iida J."/>
            <person name="Imamura K."/>
            <person name="Itoh M."/>
            <person name="Kato T."/>
            <person name="Kawaji H."/>
            <person name="Kawagashira N."/>
            <person name="Kawashima T."/>
            <person name="Kojima M."/>
            <person name="Kondo S."/>
            <person name="Konno H."/>
            <person name="Nakano K."/>
            <person name="Ninomiya N."/>
            <person name="Nishio T."/>
            <person name="Okada M."/>
            <person name="Plessy C."/>
            <person name="Shibata K."/>
            <person name="Shiraki T."/>
            <person name="Suzuki S."/>
            <person name="Tagami M."/>
            <person name="Waki K."/>
            <person name="Watahiki A."/>
            <person name="Okamura-Oho Y."/>
            <person name="Suzuki H."/>
            <person name="Kawai J."/>
            <person name="Hayashizaki Y."/>
        </authorList>
    </citation>
    <scope>NUCLEOTIDE SEQUENCE [LARGE SCALE MRNA] (ISOFORMS 1 AND 2)</scope>
    <source>
        <strain>C57BL/6J</strain>
        <tissue>Cerebellum</tissue>
        <tissue>Thymus</tissue>
    </source>
</reference>
<reference key="5">
    <citation type="journal article" date="2004" name="Genome Res.">
        <title>The status, quality, and expansion of the NIH full-length cDNA project: the Mammalian Gene Collection (MGC).</title>
        <authorList>
            <consortium name="The MGC Project Team"/>
        </authorList>
    </citation>
    <scope>NUCLEOTIDE SEQUENCE [LARGE SCALE MRNA] (ISOFORM 1)</scope>
    <source>
        <tissue>Mammary gland</tissue>
    </source>
</reference>
<reference key="6">
    <citation type="journal article" date="1998" name="Curr. Biol.">
        <title>Src-like adaptor protein (Slap) is a negative regulator of mitogenesis.</title>
        <authorList>
            <person name="Roche S."/>
            <person name="Alonso G."/>
            <person name="Kazlauskas A."/>
            <person name="Dixit V.M."/>
            <person name="Courtneidge S.A."/>
            <person name="Pandey A."/>
        </authorList>
    </citation>
    <scope>INTERACTION WITH PDGFRB</scope>
</reference>
<reference key="7">
    <citation type="journal article" date="2000" name="J. Exp. Med.">
        <title>Src-like adaptor protein (SLAP) is a negative regulator of T cell receptor signaling.</title>
        <authorList>
            <person name="Sosinowski T."/>
            <person name="Pandey A."/>
            <person name="Dixit V.M."/>
            <person name="Weiss A."/>
        </authorList>
    </citation>
    <scope>CHARACTERIZATION</scope>
    <scope>FUNCTION</scope>
    <scope>INTERACTION WITH ZAP70; CD3Z; VAV1 AND LCP2</scope>
    <scope>MUTAGENESIS OF PRO-73 AND ARG-111</scope>
</reference>
<reference key="8">
    <citation type="journal article" date="2000" name="Mol. Cell. Biol.">
        <title>Slap negatively regulates Src mitogenic function but does not revert Src-induced cell morphology changes.</title>
        <authorList>
            <person name="Manes G."/>
            <person name="Bello P."/>
            <person name="Roche S."/>
        </authorList>
    </citation>
    <scope>FUNCTION</scope>
    <scope>SUBCELLULAR LOCATION</scope>
    <scope>MYRISTOYLATION AT GLY-2</scope>
    <scope>MUTAGENESIS OF GLY-2</scope>
</reference>
<reference key="9">
    <citation type="journal article" date="2001" name="Immunity">
        <title>The Src-like adaptor protein downregulates the T cell receptor on CD4+CD8+ thymocytes and regulates positive selection.</title>
        <authorList>
            <person name="Sosinowski T."/>
            <person name="Killeen N."/>
            <person name="Weiss A."/>
        </authorList>
    </citation>
    <scope>FUNCTION</scope>
    <scope>DEVELOPMENTAL STAGE</scope>
</reference>
<reference key="10">
    <citation type="journal article" date="2007" name="J. Immunol.">
        <title>Quantitative time-resolved phosphoproteomic analysis of mast cell signaling.</title>
        <authorList>
            <person name="Cao L."/>
            <person name="Yu K."/>
            <person name="Banh C."/>
            <person name="Nguyen V."/>
            <person name="Ritz A."/>
            <person name="Raphael B.J."/>
            <person name="Kawakami Y."/>
            <person name="Kawakami T."/>
            <person name="Salomon A.R."/>
        </authorList>
    </citation>
    <scope>PHOSPHORYLATION [LARGE SCALE ANALYSIS] AT TYR-278</scope>
    <scope>IDENTIFICATION BY MASS SPECTROMETRY [LARGE SCALE ANALYSIS]</scope>
    <source>
        <tissue>Mast cell</tissue>
    </source>
</reference>
<reference key="11">
    <citation type="journal article" date="2010" name="Cell">
        <title>A tissue-specific atlas of mouse protein phosphorylation and expression.</title>
        <authorList>
            <person name="Huttlin E.L."/>
            <person name="Jedrychowski M.P."/>
            <person name="Elias J.E."/>
            <person name="Goswami T."/>
            <person name="Rad R."/>
            <person name="Beausoleil S.A."/>
            <person name="Villen J."/>
            <person name="Haas W."/>
            <person name="Sowa M.E."/>
            <person name="Gygi S.P."/>
        </authorList>
    </citation>
    <scope>IDENTIFICATION BY MASS SPECTROMETRY [LARGE SCALE ANALYSIS]</scope>
    <source>
        <tissue>Lung</tissue>
        <tissue>Spleen</tissue>
    </source>
</reference>
<keyword id="KW-0025">Alternative splicing</keyword>
<keyword id="KW-0963">Cytoplasm</keyword>
<keyword id="KW-0967">Endosome</keyword>
<keyword id="KW-0449">Lipoprotein</keyword>
<keyword id="KW-0519">Myristate</keyword>
<keyword id="KW-0597">Phosphoprotein</keyword>
<keyword id="KW-1185">Reference proteome</keyword>
<keyword id="KW-0727">SH2 domain</keyword>
<keyword id="KW-0728">SH3 domain</keyword>
<feature type="initiator methionine" description="Removed">
    <location>
        <position position="1"/>
    </location>
</feature>
<feature type="chain" id="PRO_0000071947" description="Src-like-adapter">
    <location>
        <begin position="2"/>
        <end position="281"/>
    </location>
</feature>
<feature type="domain" description="SH3" evidence="4">
    <location>
        <begin position="22"/>
        <end position="82"/>
    </location>
</feature>
<feature type="domain" description="SH2" evidence="3">
    <location>
        <begin position="84"/>
        <end position="175"/>
    </location>
</feature>
<feature type="region of interest" description="Disordered" evidence="5">
    <location>
        <begin position="1"/>
        <end position="20"/>
    </location>
</feature>
<feature type="region of interest" description="SLA C-terminal">
    <location>
        <begin position="190"/>
        <end position="281"/>
    </location>
</feature>
<feature type="compositionally biased region" description="Low complexity" evidence="5">
    <location>
        <begin position="7"/>
        <end position="20"/>
    </location>
</feature>
<feature type="modified residue" description="Phosphoserine" evidence="2">
    <location>
        <position position="258"/>
    </location>
</feature>
<feature type="modified residue" description="Phosphotyrosine" evidence="13">
    <location>
        <position position="278"/>
    </location>
</feature>
<feature type="lipid moiety-binding region" description="N-myristoyl glycine" evidence="7">
    <location>
        <position position="2"/>
    </location>
</feature>
<feature type="splice variant" id="VSP_007239" description="In isoform 2." evidence="11">
    <original>MG</original>
    <variation>MLCRLRVPSTAQGEKEM</variation>
    <location>
        <begin position="1"/>
        <end position="2"/>
    </location>
</feature>
<feature type="mutagenesis site" description="Abolishes myristoylation and localization to endosomes." evidence="7">
    <original>G</original>
    <variation>A</variation>
    <location>
        <position position="2"/>
    </location>
</feature>
<feature type="mutagenesis site" description="Slightly affects inhibitory function. Abolishes inhibitory function; when associated with E-111." evidence="6">
    <original>P</original>
    <variation>L</variation>
    <location>
        <position position="73"/>
    </location>
</feature>
<feature type="mutagenesis site" description="Abolishes localization to endosomes. Strongly affects inhibitory function. Abolishes inhibitory function; when associated with L-73." evidence="6">
    <original>R</original>
    <variation>E</variation>
    <location>
        <position position="111"/>
    </location>
</feature>
<feature type="sequence conflict" description="In Ref. 4; BAC29896." evidence="12" ref="4">
    <location>
        <position position="162"/>
    </location>
</feature>
<feature type="sequence conflict" description="In Ref. 4; BAC30988." evidence="12" ref="4">
    <original>N</original>
    <variation>S</variation>
    <location>
        <position position="179"/>
    </location>
</feature>
<proteinExistence type="evidence at protein level"/>
<accession>Q60898</accession>
<accession>Q8C9Q8</accession>
<accession>Q8CAT0</accession>
<accession>Q8CBE9</accession>
<accession>Q8QZX8</accession>
<name>SLAP1_MOUSE</name>
<protein>
    <recommendedName>
        <fullName>Src-like-adapter</fullName>
    </recommendedName>
    <alternativeName>
        <fullName>Src-like-adapter protein 1</fullName>
        <shortName>SLAP-1</shortName>
        <shortName>mSLAP</shortName>
    </alternativeName>
</protein>
<organism>
    <name type="scientific">Mus musculus</name>
    <name type="common">Mouse</name>
    <dbReference type="NCBI Taxonomy" id="10090"/>
    <lineage>
        <taxon>Eukaryota</taxon>
        <taxon>Metazoa</taxon>
        <taxon>Chordata</taxon>
        <taxon>Craniata</taxon>
        <taxon>Vertebrata</taxon>
        <taxon>Euteleostomi</taxon>
        <taxon>Mammalia</taxon>
        <taxon>Eutheria</taxon>
        <taxon>Euarchontoglires</taxon>
        <taxon>Glires</taxon>
        <taxon>Rodentia</taxon>
        <taxon>Myomorpha</taxon>
        <taxon>Muroidea</taxon>
        <taxon>Muridae</taxon>
        <taxon>Murinae</taxon>
        <taxon>Mus</taxon>
        <taxon>Mus</taxon>
    </lineage>
</organism>
<dbReference type="EMBL" id="U29056">
    <property type="protein sequence ID" value="AAA82756.1"/>
    <property type="molecule type" value="mRNA"/>
</dbReference>
<dbReference type="EMBL" id="AJ131777">
    <property type="protein sequence ID" value="CAB66139.1"/>
    <property type="molecule type" value="mRNA"/>
</dbReference>
<dbReference type="EMBL" id="AY079449">
    <property type="protein sequence ID" value="AAL87537.1"/>
    <property type="molecule type" value="Genomic_DNA"/>
</dbReference>
<dbReference type="EMBL" id="AY079450">
    <property type="protein sequence ID" value="AAL87538.1"/>
    <property type="molecule type" value="Genomic_DNA"/>
</dbReference>
<dbReference type="EMBL" id="AK036167">
    <property type="protein sequence ID" value="BAC29328.1"/>
    <property type="molecule type" value="mRNA"/>
</dbReference>
<dbReference type="EMBL" id="AK037901">
    <property type="protein sequence ID" value="BAC29896.1"/>
    <property type="molecule type" value="mRNA"/>
</dbReference>
<dbReference type="EMBL" id="AK041565">
    <property type="protein sequence ID" value="BAC30988.1"/>
    <property type="molecule type" value="mRNA"/>
</dbReference>
<dbReference type="EMBL" id="BC032922">
    <property type="protein sequence ID" value="AAH32922.1"/>
    <property type="molecule type" value="mRNA"/>
</dbReference>
<dbReference type="CCDS" id="CCDS27509.1">
    <molecule id="Q60898-1"/>
</dbReference>
<dbReference type="PIR" id="A57152">
    <property type="entry name" value="A57152"/>
</dbReference>
<dbReference type="RefSeq" id="NP_001025012.1">
    <property type="nucleotide sequence ID" value="NM_001029841.4"/>
</dbReference>
<dbReference type="RefSeq" id="NP_033218.1">
    <molecule id="Q60898-1"/>
    <property type="nucleotide sequence ID" value="NM_009192.4"/>
</dbReference>
<dbReference type="RefSeq" id="XP_011243832.1">
    <property type="nucleotide sequence ID" value="XM_011245530.2"/>
</dbReference>
<dbReference type="RefSeq" id="XP_030104293.1">
    <molecule id="Q60898-1"/>
    <property type="nucleotide sequence ID" value="XM_030248433.2"/>
</dbReference>
<dbReference type="RefSeq" id="XP_036015181.1">
    <molecule id="Q60898-1"/>
    <property type="nucleotide sequence ID" value="XM_036159288.1"/>
</dbReference>
<dbReference type="SMR" id="Q60898"/>
<dbReference type="BioGRID" id="203272">
    <property type="interactions" value="5"/>
</dbReference>
<dbReference type="DIP" id="DIP-292N"/>
<dbReference type="FunCoup" id="Q60898">
    <property type="interactions" value="1334"/>
</dbReference>
<dbReference type="IntAct" id="Q60898">
    <property type="interactions" value="1"/>
</dbReference>
<dbReference type="STRING" id="10090.ENSMUSP00000131865"/>
<dbReference type="iPTMnet" id="Q60898"/>
<dbReference type="PhosphoSitePlus" id="Q60898"/>
<dbReference type="jPOST" id="Q60898"/>
<dbReference type="PaxDb" id="10090-ENSMUSP00000131865"/>
<dbReference type="ProteomicsDB" id="258687">
    <molecule id="Q60898-1"/>
</dbReference>
<dbReference type="ProteomicsDB" id="258688">
    <molecule id="Q60898-2"/>
</dbReference>
<dbReference type="Antibodypedia" id="1995">
    <property type="antibodies" value="125 antibodies from 27 providers"/>
</dbReference>
<dbReference type="DNASU" id="20491"/>
<dbReference type="Ensembl" id="ENSMUST00000100572.10">
    <molecule id="Q60898-1"/>
    <property type="protein sequence ID" value="ENSMUSP00000098138.4"/>
    <property type="gene ID" value="ENSMUSG00000022372.15"/>
</dbReference>
<dbReference type="Ensembl" id="ENSMUST00000164163.8">
    <molecule id="Q60898-1"/>
    <property type="protein sequence ID" value="ENSMUSP00000127901.2"/>
    <property type="gene ID" value="ENSMUSG00000022372.15"/>
</dbReference>
<dbReference type="Ensembl" id="ENSMUST00000168589.8">
    <molecule id="Q60898-1"/>
    <property type="protein sequence ID" value="ENSMUSP00000130222.2"/>
    <property type="gene ID" value="ENSMUSG00000022372.15"/>
</dbReference>
<dbReference type="GeneID" id="20491"/>
<dbReference type="KEGG" id="mmu:20491"/>
<dbReference type="UCSC" id="uc007war.2">
    <molecule id="Q60898-1"/>
    <property type="organism name" value="mouse"/>
</dbReference>
<dbReference type="AGR" id="MGI:104295"/>
<dbReference type="CTD" id="6503"/>
<dbReference type="MGI" id="MGI:104295">
    <property type="gene designation" value="Sla"/>
</dbReference>
<dbReference type="VEuPathDB" id="HostDB:ENSMUSG00000022372"/>
<dbReference type="eggNOG" id="ENOG502QPWY">
    <property type="taxonomic scope" value="Eukaryota"/>
</dbReference>
<dbReference type="GeneTree" id="ENSGT00940000159104"/>
<dbReference type="HOGENOM" id="CLU_084503_1_0_1"/>
<dbReference type="InParanoid" id="Q60898"/>
<dbReference type="OMA" id="ETTNGFY"/>
<dbReference type="OrthoDB" id="9924021at2759"/>
<dbReference type="PhylomeDB" id="Q60898"/>
<dbReference type="TreeFam" id="TF354288"/>
<dbReference type="Reactome" id="R-MMU-9706369">
    <property type="pathway name" value="Negative regulation of FLT3"/>
</dbReference>
<dbReference type="BioGRID-ORCS" id="20491">
    <property type="hits" value="2 hits in 80 CRISPR screens"/>
</dbReference>
<dbReference type="ChiTaRS" id="Sla">
    <property type="organism name" value="mouse"/>
</dbReference>
<dbReference type="PRO" id="PR:Q60898"/>
<dbReference type="Proteomes" id="UP000000589">
    <property type="component" value="Chromosome 15"/>
</dbReference>
<dbReference type="RNAct" id="Q60898">
    <property type="molecule type" value="protein"/>
</dbReference>
<dbReference type="Bgee" id="ENSMUSG00000022372">
    <property type="expression patterns" value="Expressed in cortical plate and 133 other cell types or tissues"/>
</dbReference>
<dbReference type="ExpressionAtlas" id="Q60898">
    <property type="expression patterns" value="baseline and differential"/>
</dbReference>
<dbReference type="GO" id="GO:0005768">
    <property type="term" value="C:endosome"/>
    <property type="evidence" value="ECO:0007669"/>
    <property type="project" value="UniProtKB-SubCell"/>
</dbReference>
<dbReference type="CDD" id="cd10344">
    <property type="entry name" value="SH2_SLAP"/>
    <property type="match status" value="1"/>
</dbReference>
<dbReference type="CDD" id="cd12010">
    <property type="entry name" value="SH3_SLAP"/>
    <property type="match status" value="1"/>
</dbReference>
<dbReference type="FunFam" id="2.30.30.40:FF:000134">
    <property type="entry name" value="src-like-adapter isoform X1"/>
    <property type="match status" value="1"/>
</dbReference>
<dbReference type="FunFam" id="3.30.505.10:FF:000039">
    <property type="entry name" value="src-like-adapter isoform X1"/>
    <property type="match status" value="1"/>
</dbReference>
<dbReference type="Gene3D" id="3.30.505.10">
    <property type="entry name" value="SH2 domain"/>
    <property type="match status" value="1"/>
</dbReference>
<dbReference type="Gene3D" id="2.30.30.40">
    <property type="entry name" value="SH3 Domains"/>
    <property type="match status" value="1"/>
</dbReference>
<dbReference type="InterPro" id="IPR043539">
    <property type="entry name" value="Grb2-like"/>
</dbReference>
<dbReference type="InterPro" id="IPR000980">
    <property type="entry name" value="SH2"/>
</dbReference>
<dbReference type="InterPro" id="IPR036860">
    <property type="entry name" value="SH2_dom_sf"/>
</dbReference>
<dbReference type="InterPro" id="IPR036028">
    <property type="entry name" value="SH3-like_dom_sf"/>
</dbReference>
<dbReference type="InterPro" id="IPR001452">
    <property type="entry name" value="SH3_domain"/>
</dbReference>
<dbReference type="InterPro" id="IPR035052">
    <property type="entry name" value="SLAP_SH2"/>
</dbReference>
<dbReference type="InterPro" id="IPR035596">
    <property type="entry name" value="SLAP_SH3"/>
</dbReference>
<dbReference type="PANTHER" id="PTHR46037">
    <property type="entry name" value="PROTEIN ENHANCER OF SEVENLESS 2B"/>
    <property type="match status" value="1"/>
</dbReference>
<dbReference type="Pfam" id="PF00017">
    <property type="entry name" value="SH2"/>
    <property type="match status" value="1"/>
</dbReference>
<dbReference type="Pfam" id="PF00018">
    <property type="entry name" value="SH3_1"/>
    <property type="match status" value="1"/>
</dbReference>
<dbReference type="PRINTS" id="PR00401">
    <property type="entry name" value="SH2DOMAIN"/>
</dbReference>
<dbReference type="SMART" id="SM00252">
    <property type="entry name" value="SH2"/>
    <property type="match status" value="1"/>
</dbReference>
<dbReference type="SMART" id="SM00326">
    <property type="entry name" value="SH3"/>
    <property type="match status" value="1"/>
</dbReference>
<dbReference type="SUPFAM" id="SSF55550">
    <property type="entry name" value="SH2 domain"/>
    <property type="match status" value="1"/>
</dbReference>
<dbReference type="SUPFAM" id="SSF50044">
    <property type="entry name" value="SH3-domain"/>
    <property type="match status" value="1"/>
</dbReference>
<dbReference type="PROSITE" id="PS50001">
    <property type="entry name" value="SH2"/>
    <property type="match status" value="1"/>
</dbReference>
<dbReference type="PROSITE" id="PS50002">
    <property type="entry name" value="SH3"/>
    <property type="match status" value="1"/>
</dbReference>